<evidence type="ECO:0000255" key="1">
    <source>
        <dbReference type="HAMAP-Rule" id="MF_01498"/>
    </source>
</evidence>
<evidence type="ECO:0000256" key="2">
    <source>
        <dbReference type="SAM" id="MobiDB-lite"/>
    </source>
</evidence>
<name>RADA_MYCTO</name>
<protein>
    <recommendedName>
        <fullName evidence="1">DNA repair protein RadA</fullName>
        <ecNumber evidence="1">3.6.4.-</ecNumber>
    </recommendedName>
    <alternativeName>
        <fullName evidence="1">Branch migration protein RadA</fullName>
    </alternativeName>
</protein>
<keyword id="KW-0067">ATP-binding</keyword>
<keyword id="KW-0227">DNA damage</keyword>
<keyword id="KW-0234">DNA repair</keyword>
<keyword id="KW-0238">DNA-binding</keyword>
<keyword id="KW-0378">Hydrolase</keyword>
<keyword id="KW-0479">Metal-binding</keyword>
<keyword id="KW-0547">Nucleotide-binding</keyword>
<keyword id="KW-1185">Reference proteome</keyword>
<keyword id="KW-0346">Stress response</keyword>
<keyword id="KW-0862">Zinc</keyword>
<keyword id="KW-0863">Zinc-finger</keyword>
<dbReference type="EC" id="3.6.4.-" evidence="1"/>
<dbReference type="EMBL" id="AE000516">
    <property type="protein sequence ID" value="AAK48049.1"/>
    <property type="molecule type" value="Genomic_DNA"/>
</dbReference>
<dbReference type="PIR" id="B70804">
    <property type="entry name" value="B70804"/>
</dbReference>
<dbReference type="RefSeq" id="WP_003419487.1">
    <property type="nucleotide sequence ID" value="NZ_KK341227.1"/>
</dbReference>
<dbReference type="SMR" id="P9WHJ8"/>
<dbReference type="MEROPS" id="S16.A04"/>
<dbReference type="GeneID" id="45427573"/>
<dbReference type="KEGG" id="mtc:MT3691"/>
<dbReference type="PATRIC" id="fig|83331.31.peg.3974"/>
<dbReference type="HOGENOM" id="CLU_018264_0_1_11"/>
<dbReference type="Proteomes" id="UP000001020">
    <property type="component" value="Chromosome"/>
</dbReference>
<dbReference type="GO" id="GO:0005829">
    <property type="term" value="C:cytosol"/>
    <property type="evidence" value="ECO:0007669"/>
    <property type="project" value="TreeGrafter"/>
</dbReference>
<dbReference type="GO" id="GO:0005524">
    <property type="term" value="F:ATP binding"/>
    <property type="evidence" value="ECO:0007669"/>
    <property type="project" value="UniProtKB-UniRule"/>
</dbReference>
<dbReference type="GO" id="GO:0016887">
    <property type="term" value="F:ATP hydrolysis activity"/>
    <property type="evidence" value="ECO:0007669"/>
    <property type="project" value="InterPro"/>
</dbReference>
<dbReference type="GO" id="GO:0140664">
    <property type="term" value="F:ATP-dependent DNA damage sensor activity"/>
    <property type="evidence" value="ECO:0007669"/>
    <property type="project" value="InterPro"/>
</dbReference>
<dbReference type="GO" id="GO:0003684">
    <property type="term" value="F:damaged DNA binding"/>
    <property type="evidence" value="ECO:0007669"/>
    <property type="project" value="InterPro"/>
</dbReference>
<dbReference type="GO" id="GO:0008270">
    <property type="term" value="F:zinc ion binding"/>
    <property type="evidence" value="ECO:0007669"/>
    <property type="project" value="UniProtKB-KW"/>
</dbReference>
<dbReference type="GO" id="GO:0000725">
    <property type="term" value="P:recombinational repair"/>
    <property type="evidence" value="ECO:0007669"/>
    <property type="project" value="UniProtKB-UniRule"/>
</dbReference>
<dbReference type="CDD" id="cd01121">
    <property type="entry name" value="RadA_SMS_N"/>
    <property type="match status" value="1"/>
</dbReference>
<dbReference type="FunFam" id="3.30.230.10:FF:000026">
    <property type="entry name" value="DNA repair protein RadA"/>
    <property type="match status" value="1"/>
</dbReference>
<dbReference type="FunFam" id="3.40.50.300:FF:000050">
    <property type="entry name" value="DNA repair protein RadA"/>
    <property type="match status" value="1"/>
</dbReference>
<dbReference type="Gene3D" id="3.30.230.10">
    <property type="match status" value="1"/>
</dbReference>
<dbReference type="Gene3D" id="3.40.50.300">
    <property type="entry name" value="P-loop containing nucleotide triphosphate hydrolases"/>
    <property type="match status" value="1"/>
</dbReference>
<dbReference type="HAMAP" id="MF_01498">
    <property type="entry name" value="RadA_bact"/>
    <property type="match status" value="1"/>
</dbReference>
<dbReference type="InterPro" id="IPR003593">
    <property type="entry name" value="AAA+_ATPase"/>
</dbReference>
<dbReference type="InterPro" id="IPR004504">
    <property type="entry name" value="DNA_repair_RadA"/>
</dbReference>
<dbReference type="InterPro" id="IPR027417">
    <property type="entry name" value="P-loop_NTPase"/>
</dbReference>
<dbReference type="InterPro" id="IPR020588">
    <property type="entry name" value="RecA_ATP-bd"/>
</dbReference>
<dbReference type="InterPro" id="IPR020568">
    <property type="entry name" value="Ribosomal_Su5_D2-typ_SF"/>
</dbReference>
<dbReference type="InterPro" id="IPR014721">
    <property type="entry name" value="Ribsml_uS5_D2-typ_fold_subgr"/>
</dbReference>
<dbReference type="InterPro" id="IPR041166">
    <property type="entry name" value="Rubredoxin_2"/>
</dbReference>
<dbReference type="NCBIfam" id="TIGR00416">
    <property type="entry name" value="sms"/>
    <property type="match status" value="1"/>
</dbReference>
<dbReference type="PANTHER" id="PTHR32472">
    <property type="entry name" value="DNA REPAIR PROTEIN RADA"/>
    <property type="match status" value="1"/>
</dbReference>
<dbReference type="PANTHER" id="PTHR32472:SF10">
    <property type="entry name" value="DNA REPAIR PROTEIN RADA-LIKE PROTEIN"/>
    <property type="match status" value="1"/>
</dbReference>
<dbReference type="Pfam" id="PF13481">
    <property type="entry name" value="AAA_25"/>
    <property type="match status" value="1"/>
</dbReference>
<dbReference type="Pfam" id="PF13541">
    <property type="entry name" value="ChlI"/>
    <property type="match status" value="1"/>
</dbReference>
<dbReference type="Pfam" id="PF18073">
    <property type="entry name" value="Zn_ribbon_LapB"/>
    <property type="match status" value="1"/>
</dbReference>
<dbReference type="PRINTS" id="PR01874">
    <property type="entry name" value="DNAREPAIRADA"/>
</dbReference>
<dbReference type="SMART" id="SM00382">
    <property type="entry name" value="AAA"/>
    <property type="match status" value="1"/>
</dbReference>
<dbReference type="SUPFAM" id="SSF52540">
    <property type="entry name" value="P-loop containing nucleoside triphosphate hydrolases"/>
    <property type="match status" value="1"/>
</dbReference>
<dbReference type="SUPFAM" id="SSF54211">
    <property type="entry name" value="Ribosomal protein S5 domain 2-like"/>
    <property type="match status" value="1"/>
</dbReference>
<dbReference type="PROSITE" id="PS50162">
    <property type="entry name" value="RECA_2"/>
    <property type="match status" value="1"/>
</dbReference>
<gene>
    <name evidence="1" type="primary">radA</name>
    <name type="ordered locus">MT3691</name>
</gene>
<accession>P9WHJ8</accession>
<accession>L0TCZ7</accession>
<accession>O53570</accession>
<accession>P65953</accession>
<comment type="function">
    <text evidence="1">DNA-dependent ATPase involved in processing of recombination intermediates, plays a role in repairing DNA breaks. Stimulates the branch migration of RecA-mediated strand transfer reactions, allowing the 3' invading strand to extend heteroduplex DNA faster. Binds ssDNA in the presence of ADP but not other nucleotides, has ATPase activity that is stimulated by ssDNA and various branched DNA structures, but inhibited by SSB. Does not have RecA's homology-searching function.</text>
</comment>
<comment type="domain">
    <text evidence="1">Has a putative N-terminal zinc-finger, a middle region with homology to RecA with ATPase motifs including the RadA KNRFG motif, while the C-terminus is homologous to Lon protease.</text>
</comment>
<comment type="similarity">
    <text evidence="1">Belongs to the RecA family. RadA subfamily.</text>
</comment>
<proteinExistence type="inferred from homology"/>
<organism>
    <name type="scientific">Mycobacterium tuberculosis (strain CDC 1551 / Oshkosh)</name>
    <dbReference type="NCBI Taxonomy" id="83331"/>
    <lineage>
        <taxon>Bacteria</taxon>
        <taxon>Bacillati</taxon>
        <taxon>Actinomycetota</taxon>
        <taxon>Actinomycetes</taxon>
        <taxon>Mycobacteriales</taxon>
        <taxon>Mycobacteriaceae</taxon>
        <taxon>Mycobacterium</taxon>
        <taxon>Mycobacterium tuberculosis complex</taxon>
    </lineage>
</organism>
<reference key="1">
    <citation type="journal article" date="2002" name="J. Bacteriol.">
        <title>Whole-genome comparison of Mycobacterium tuberculosis clinical and laboratory strains.</title>
        <authorList>
            <person name="Fleischmann R.D."/>
            <person name="Alland D."/>
            <person name="Eisen J.A."/>
            <person name="Carpenter L."/>
            <person name="White O."/>
            <person name="Peterson J.D."/>
            <person name="DeBoy R.T."/>
            <person name="Dodson R.J."/>
            <person name="Gwinn M.L."/>
            <person name="Haft D.H."/>
            <person name="Hickey E.K."/>
            <person name="Kolonay J.F."/>
            <person name="Nelson W.C."/>
            <person name="Umayam L.A."/>
            <person name="Ermolaeva M.D."/>
            <person name="Salzberg S.L."/>
            <person name="Delcher A."/>
            <person name="Utterback T.R."/>
            <person name="Weidman J.F."/>
            <person name="Khouri H.M."/>
            <person name="Gill J."/>
            <person name="Mikula A."/>
            <person name="Bishai W."/>
            <person name="Jacobs W.R. Jr."/>
            <person name="Venter J.C."/>
            <person name="Fraser C.M."/>
        </authorList>
    </citation>
    <scope>NUCLEOTIDE SEQUENCE [LARGE SCALE GENOMIC DNA]</scope>
    <source>
        <strain>CDC 1551 / Oshkosh</strain>
    </source>
</reference>
<sequence>MANARSQYRCSECRHVSAKWVGRCLECGRWGTVDEVAVLSAVGGTRRRSVAPASGAVPISAVDAHRTRPCPTGIDELDRVLGGGIVPGSVTLLAGDPGVGKSTLLLEVAHRWAQSGRRALYVSGEESAGQIRLRADRIGCGTEVEEIYLAAQSDVHTVLDQIETVQPALVIVDSVQTMSTSEADGVTGGVTQVRAVTAALTAAAKANEVALILVGHVTKDGAIAGPRSLEHLVDVVLHFEGDRNGALRMVRGVKNRFGAADEVGCFLLHDNGIDGIVDPSNLFLDQRPTPVAGTAITVTLDGKRPLVGEVQALLATPCGGSPRRAVSGIHQARAAMIAAVLEKHARLAIAVNDIYLSTVGGMRLTEPSADLAVAIALASAYANLPLPTTAVMIGEVGLAGDIRRVNGMARRLSEAARQGFTIALVPPSDDPVPPGMHALRASTIVAALQYMVDIADHRGTTLATPPSHSGTGHVPLGRGT</sequence>
<feature type="chain" id="PRO_0000428172" description="DNA repair protein RadA">
    <location>
        <begin position="1"/>
        <end position="480"/>
    </location>
</feature>
<feature type="zinc finger region" description="C4-type" evidence="1">
    <location>
        <begin position="10"/>
        <end position="27"/>
    </location>
</feature>
<feature type="region of interest" description="Lon-protease-like" evidence="1">
    <location>
        <begin position="353"/>
        <end position="480"/>
    </location>
</feature>
<feature type="region of interest" description="Disordered" evidence="2">
    <location>
        <begin position="459"/>
        <end position="480"/>
    </location>
</feature>
<feature type="short sequence motif" description="RadA KNRFG motif" evidence="1">
    <location>
        <begin position="254"/>
        <end position="258"/>
    </location>
</feature>
<feature type="compositionally biased region" description="Polar residues" evidence="2">
    <location>
        <begin position="461"/>
        <end position="470"/>
    </location>
</feature>
<feature type="binding site" evidence="1">
    <location>
        <begin position="95"/>
        <end position="102"/>
    </location>
    <ligand>
        <name>ATP</name>
        <dbReference type="ChEBI" id="CHEBI:30616"/>
    </ligand>
</feature>